<comment type="alternative products">
    <event type="alternative splicing"/>
    <isoform>
        <id>Q8GZ43-1</id>
        <name>1</name>
        <sequence type="displayed"/>
    </isoform>
    <text>A number of isoforms are produced. According to EST sequences.</text>
</comment>
<comment type="sequence caution" evidence="2">
    <conflict type="erroneous gene model prediction">
        <sequence resource="EMBL-CDS" id="AAG00249"/>
    </conflict>
</comment>
<organism>
    <name type="scientific">Arabidopsis thaliana</name>
    <name type="common">Mouse-ear cress</name>
    <dbReference type="NCBI Taxonomy" id="3702"/>
    <lineage>
        <taxon>Eukaryota</taxon>
        <taxon>Viridiplantae</taxon>
        <taxon>Streptophyta</taxon>
        <taxon>Embryophyta</taxon>
        <taxon>Tracheophyta</taxon>
        <taxon>Spermatophyta</taxon>
        <taxon>Magnoliopsida</taxon>
        <taxon>eudicotyledons</taxon>
        <taxon>Gunneridae</taxon>
        <taxon>Pentapetalae</taxon>
        <taxon>rosids</taxon>
        <taxon>malvids</taxon>
        <taxon>Brassicales</taxon>
        <taxon>Brassicaceae</taxon>
        <taxon>Camelineae</taxon>
        <taxon>Arabidopsis</taxon>
    </lineage>
</organism>
<gene>
    <name type="ordered locus">At1g67325</name>
    <name type="ORF">F1N21_14</name>
</gene>
<accession>Q8GZ43</accession>
<accession>Q9FYG1</accession>
<evidence type="ECO:0000256" key="1">
    <source>
        <dbReference type="SAM" id="MobiDB-lite"/>
    </source>
</evidence>
<evidence type="ECO:0000305" key="2"/>
<evidence type="ECO:0007744" key="3">
    <source>
    </source>
</evidence>
<feature type="chain" id="PRO_0000220622" description="RanBP2-type zinc finger protein At1g67325">
    <location>
        <begin position="1"/>
        <end position="288"/>
    </location>
</feature>
<feature type="zinc finger region" description="RanBP2-type 1">
    <location>
        <begin position="22"/>
        <end position="53"/>
    </location>
</feature>
<feature type="zinc finger region" description="RanBP2-type 2">
    <location>
        <begin position="194"/>
        <end position="225"/>
    </location>
</feature>
<feature type="zinc finger region" description="RanBP2-type 3">
    <location>
        <begin position="241"/>
        <end position="272"/>
    </location>
</feature>
<feature type="region of interest" description="Disordered" evidence="1">
    <location>
        <begin position="1"/>
        <end position="24"/>
    </location>
</feature>
<feature type="region of interest" description="Disordered" evidence="1">
    <location>
        <begin position="52"/>
        <end position="77"/>
    </location>
</feature>
<feature type="region of interest" description="Disordered" evidence="1">
    <location>
        <begin position="176"/>
        <end position="198"/>
    </location>
</feature>
<feature type="region of interest" description="Disordered" evidence="1">
    <location>
        <begin position="222"/>
        <end position="248"/>
    </location>
</feature>
<feature type="region of interest" description="Disordered" evidence="1">
    <location>
        <begin position="265"/>
        <end position="288"/>
    </location>
</feature>
<feature type="compositionally biased region" description="Polar residues" evidence="1">
    <location>
        <begin position="1"/>
        <end position="11"/>
    </location>
</feature>
<feature type="compositionally biased region" description="Basic and acidic residues" evidence="1">
    <location>
        <begin position="15"/>
        <end position="24"/>
    </location>
</feature>
<feature type="compositionally biased region" description="Basic and acidic residues" evidence="1">
    <location>
        <begin position="181"/>
        <end position="197"/>
    </location>
</feature>
<feature type="compositionally biased region" description="Polar residues" evidence="1">
    <location>
        <begin position="223"/>
        <end position="241"/>
    </location>
</feature>
<feature type="modified residue" description="Phosphoserine" evidence="3">
    <location>
        <position position="278"/>
    </location>
</feature>
<name>YZR3_ARATH</name>
<keyword id="KW-0025">Alternative splicing</keyword>
<keyword id="KW-0479">Metal-binding</keyword>
<keyword id="KW-0597">Phosphoprotein</keyword>
<keyword id="KW-1185">Reference proteome</keyword>
<keyword id="KW-0677">Repeat</keyword>
<keyword id="KW-0862">Zinc</keyword>
<keyword id="KW-0863">Zinc-finger</keyword>
<sequence length="288" mass="31234">MSQVDNRNSSAAKRARTDGGRREDDWICPSCGNVNFSFRTTCNMRNCTQPRPADHNGKSAPKPMQHQQGFSSPGAYLGSGGPPPVYMGGSPYGSPLFNGSSMPPYDVPFSGGSPYHFNYNSRMPAGAHYRPLHMSGPPPYHGGSMMGSGGMYGMPPPIDRYGLGMAMGPGSAAAMMPRPRFYPDEKSQKRDSTRDNDWTCPNCGNVNFSFRTVCNMRKCNTPKPGSQQGGSSDKISKQNAPEGSWKCDNCGNINYPFRSKCNRQNCGADKPGDRSNGSPSRAPEENDQ</sequence>
<protein>
    <recommendedName>
        <fullName>RanBP2-type zinc finger protein At1g67325</fullName>
    </recommendedName>
</protein>
<reference key="1">
    <citation type="journal article" date="2000" name="Nature">
        <title>Sequence and analysis of chromosome 1 of the plant Arabidopsis thaliana.</title>
        <authorList>
            <person name="Theologis A."/>
            <person name="Ecker J.R."/>
            <person name="Palm C.J."/>
            <person name="Federspiel N.A."/>
            <person name="Kaul S."/>
            <person name="White O."/>
            <person name="Alonso J."/>
            <person name="Altafi H."/>
            <person name="Araujo R."/>
            <person name="Bowman C.L."/>
            <person name="Brooks S.Y."/>
            <person name="Buehler E."/>
            <person name="Chan A."/>
            <person name="Chao Q."/>
            <person name="Chen H."/>
            <person name="Cheuk R.F."/>
            <person name="Chin C.W."/>
            <person name="Chung M.K."/>
            <person name="Conn L."/>
            <person name="Conway A.B."/>
            <person name="Conway A.R."/>
            <person name="Creasy T.H."/>
            <person name="Dewar K."/>
            <person name="Dunn P."/>
            <person name="Etgu P."/>
            <person name="Feldblyum T.V."/>
            <person name="Feng J.-D."/>
            <person name="Fong B."/>
            <person name="Fujii C.Y."/>
            <person name="Gill J.E."/>
            <person name="Goldsmith A.D."/>
            <person name="Haas B."/>
            <person name="Hansen N.F."/>
            <person name="Hughes B."/>
            <person name="Huizar L."/>
            <person name="Hunter J.L."/>
            <person name="Jenkins J."/>
            <person name="Johnson-Hopson C."/>
            <person name="Khan S."/>
            <person name="Khaykin E."/>
            <person name="Kim C.J."/>
            <person name="Koo H.L."/>
            <person name="Kremenetskaia I."/>
            <person name="Kurtz D.B."/>
            <person name="Kwan A."/>
            <person name="Lam B."/>
            <person name="Langin-Hooper S."/>
            <person name="Lee A."/>
            <person name="Lee J.M."/>
            <person name="Lenz C.A."/>
            <person name="Li J.H."/>
            <person name="Li Y.-P."/>
            <person name="Lin X."/>
            <person name="Liu S.X."/>
            <person name="Liu Z.A."/>
            <person name="Luros J.S."/>
            <person name="Maiti R."/>
            <person name="Marziali A."/>
            <person name="Militscher J."/>
            <person name="Miranda M."/>
            <person name="Nguyen M."/>
            <person name="Nierman W.C."/>
            <person name="Osborne B.I."/>
            <person name="Pai G."/>
            <person name="Peterson J."/>
            <person name="Pham P.K."/>
            <person name="Rizzo M."/>
            <person name="Rooney T."/>
            <person name="Rowley D."/>
            <person name="Sakano H."/>
            <person name="Salzberg S.L."/>
            <person name="Schwartz J.R."/>
            <person name="Shinn P."/>
            <person name="Southwick A.M."/>
            <person name="Sun H."/>
            <person name="Tallon L.J."/>
            <person name="Tambunga G."/>
            <person name="Toriumi M.J."/>
            <person name="Town C.D."/>
            <person name="Utterback T."/>
            <person name="Van Aken S."/>
            <person name="Vaysberg M."/>
            <person name="Vysotskaia V.S."/>
            <person name="Walker M."/>
            <person name="Wu D."/>
            <person name="Yu G."/>
            <person name="Fraser C.M."/>
            <person name="Venter J.C."/>
            <person name="Davis R.W."/>
        </authorList>
    </citation>
    <scope>NUCLEOTIDE SEQUENCE [LARGE SCALE GENOMIC DNA]</scope>
    <source>
        <strain>cv. Columbia</strain>
    </source>
</reference>
<reference key="2">
    <citation type="journal article" date="2017" name="Plant J.">
        <title>Araport11: a complete reannotation of the Arabidopsis thaliana reference genome.</title>
        <authorList>
            <person name="Cheng C.Y."/>
            <person name="Krishnakumar V."/>
            <person name="Chan A.P."/>
            <person name="Thibaud-Nissen F."/>
            <person name="Schobel S."/>
            <person name="Town C.D."/>
        </authorList>
    </citation>
    <scope>GENOME REANNOTATION</scope>
    <source>
        <strain>cv. Columbia</strain>
    </source>
</reference>
<reference key="3">
    <citation type="journal article" date="2002" name="Science">
        <title>Functional annotation of a full-length Arabidopsis cDNA collection.</title>
        <authorList>
            <person name="Seki M."/>
            <person name="Narusaka M."/>
            <person name="Kamiya A."/>
            <person name="Ishida J."/>
            <person name="Satou M."/>
            <person name="Sakurai T."/>
            <person name="Nakajima M."/>
            <person name="Enju A."/>
            <person name="Akiyama K."/>
            <person name="Oono Y."/>
            <person name="Muramatsu M."/>
            <person name="Hayashizaki Y."/>
            <person name="Kawai J."/>
            <person name="Carninci P."/>
            <person name="Itoh M."/>
            <person name="Ishii Y."/>
            <person name="Arakawa T."/>
            <person name="Shibata K."/>
            <person name="Shinagawa A."/>
            <person name="Shinozaki K."/>
        </authorList>
    </citation>
    <scope>NUCLEOTIDE SEQUENCE [LARGE SCALE MRNA]</scope>
    <source>
        <strain>cv. Columbia</strain>
    </source>
</reference>
<reference key="4">
    <citation type="journal article" date="2003" name="Science">
        <title>Empirical analysis of transcriptional activity in the Arabidopsis genome.</title>
        <authorList>
            <person name="Yamada K."/>
            <person name="Lim J."/>
            <person name="Dale J.M."/>
            <person name="Chen H."/>
            <person name="Shinn P."/>
            <person name="Palm C.J."/>
            <person name="Southwick A.M."/>
            <person name="Wu H.C."/>
            <person name="Kim C.J."/>
            <person name="Nguyen M."/>
            <person name="Pham P.K."/>
            <person name="Cheuk R.F."/>
            <person name="Karlin-Newmann G."/>
            <person name="Liu S.X."/>
            <person name="Lam B."/>
            <person name="Sakano H."/>
            <person name="Wu T."/>
            <person name="Yu G."/>
            <person name="Miranda M."/>
            <person name="Quach H.L."/>
            <person name="Tripp M."/>
            <person name="Chang C.H."/>
            <person name="Lee J.M."/>
            <person name="Toriumi M.J."/>
            <person name="Chan M.M."/>
            <person name="Tang C.C."/>
            <person name="Onodera C.S."/>
            <person name="Deng J.M."/>
            <person name="Akiyama K."/>
            <person name="Ansari Y."/>
            <person name="Arakawa T."/>
            <person name="Banh J."/>
            <person name="Banno F."/>
            <person name="Bowser L."/>
            <person name="Brooks S.Y."/>
            <person name="Carninci P."/>
            <person name="Chao Q."/>
            <person name="Choy N."/>
            <person name="Enju A."/>
            <person name="Goldsmith A.D."/>
            <person name="Gurjal M."/>
            <person name="Hansen N.F."/>
            <person name="Hayashizaki Y."/>
            <person name="Johnson-Hopson C."/>
            <person name="Hsuan V.W."/>
            <person name="Iida K."/>
            <person name="Karnes M."/>
            <person name="Khan S."/>
            <person name="Koesema E."/>
            <person name="Ishida J."/>
            <person name="Jiang P.X."/>
            <person name="Jones T."/>
            <person name="Kawai J."/>
            <person name="Kamiya A."/>
            <person name="Meyers C."/>
            <person name="Nakajima M."/>
            <person name="Narusaka M."/>
            <person name="Seki M."/>
            <person name="Sakurai T."/>
            <person name="Satou M."/>
            <person name="Tamse R."/>
            <person name="Vaysberg M."/>
            <person name="Wallender E.K."/>
            <person name="Wong C."/>
            <person name="Yamamura Y."/>
            <person name="Yuan S."/>
            <person name="Shinozaki K."/>
            <person name="Davis R.W."/>
            <person name="Theologis A."/>
            <person name="Ecker J.R."/>
        </authorList>
    </citation>
    <scope>NUCLEOTIDE SEQUENCE [LARGE SCALE MRNA]</scope>
    <source>
        <strain>cv. Columbia</strain>
    </source>
</reference>
<reference key="5">
    <citation type="journal article" date="2009" name="Plant Physiol.">
        <title>Large-scale Arabidopsis phosphoproteome profiling reveals novel chloroplast kinase substrates and phosphorylation networks.</title>
        <authorList>
            <person name="Reiland S."/>
            <person name="Messerli G."/>
            <person name="Baerenfaller K."/>
            <person name="Gerrits B."/>
            <person name="Endler A."/>
            <person name="Grossmann J."/>
            <person name="Gruissem W."/>
            <person name="Baginsky S."/>
        </authorList>
    </citation>
    <scope>PHOSPHORYLATION [LARGE SCALE ANALYSIS] AT SER-278</scope>
    <scope>IDENTIFICATION BY MASS SPECTROMETRY [LARGE SCALE ANALYSIS]</scope>
</reference>
<proteinExistence type="evidence at protein level"/>
<dbReference type="EMBL" id="AC002130">
    <property type="protein sequence ID" value="AAG00249.1"/>
    <property type="status" value="ALT_SEQ"/>
    <property type="molecule type" value="Genomic_DNA"/>
</dbReference>
<dbReference type="EMBL" id="CP002684">
    <property type="protein sequence ID" value="AEE34631.1"/>
    <property type="molecule type" value="Genomic_DNA"/>
</dbReference>
<dbReference type="EMBL" id="AK117220">
    <property type="protein sequence ID" value="BAC41896.1"/>
    <property type="molecule type" value="mRNA"/>
</dbReference>
<dbReference type="EMBL" id="BT005282">
    <property type="protein sequence ID" value="AAO63346.1"/>
    <property type="molecule type" value="mRNA"/>
</dbReference>
<dbReference type="PIR" id="G96696">
    <property type="entry name" value="G96696"/>
</dbReference>
<dbReference type="RefSeq" id="NP_001185341.1">
    <molecule id="Q8GZ43-1"/>
    <property type="nucleotide sequence ID" value="NM_001198412.1"/>
</dbReference>
<dbReference type="SMR" id="Q8GZ43"/>
<dbReference type="FunCoup" id="Q8GZ43">
    <property type="interactions" value="1388"/>
</dbReference>
<dbReference type="STRING" id="3702.Q8GZ43"/>
<dbReference type="iPTMnet" id="Q8GZ43"/>
<dbReference type="PaxDb" id="3702-AT1G67325.2"/>
<dbReference type="ProteomicsDB" id="232317">
    <molecule id="Q8GZ43-1"/>
</dbReference>
<dbReference type="EnsemblPlants" id="AT1G67325.2">
    <molecule id="Q8GZ43-1"/>
    <property type="protein sequence ID" value="AT1G67325.2"/>
    <property type="gene ID" value="AT1G67325"/>
</dbReference>
<dbReference type="GeneID" id="843053"/>
<dbReference type="Gramene" id="AT1G67325.2">
    <molecule id="Q8GZ43-1"/>
    <property type="protein sequence ID" value="AT1G67325.2"/>
    <property type="gene ID" value="AT1G67325"/>
</dbReference>
<dbReference type="KEGG" id="ath:AT1G67325"/>
<dbReference type="Araport" id="AT1G67325"/>
<dbReference type="TAIR" id="AT1G67325"/>
<dbReference type="eggNOG" id="KOG1995">
    <property type="taxonomic scope" value="Eukaryota"/>
</dbReference>
<dbReference type="InParanoid" id="Q8GZ43"/>
<dbReference type="PhylomeDB" id="Q8GZ43"/>
<dbReference type="PRO" id="PR:Q8GZ43"/>
<dbReference type="Proteomes" id="UP000006548">
    <property type="component" value="Chromosome 1"/>
</dbReference>
<dbReference type="ExpressionAtlas" id="Q8GZ43">
    <property type="expression patterns" value="baseline and differential"/>
</dbReference>
<dbReference type="GO" id="GO:0003729">
    <property type="term" value="F:mRNA binding"/>
    <property type="evidence" value="ECO:0007005"/>
    <property type="project" value="TAIR"/>
</dbReference>
<dbReference type="GO" id="GO:0008270">
    <property type="term" value="F:zinc ion binding"/>
    <property type="evidence" value="ECO:0007669"/>
    <property type="project" value="UniProtKB-KW"/>
</dbReference>
<dbReference type="FunFam" id="4.10.1060.10:FF:000020">
    <property type="entry name" value="ranBP2-type zinc finger protein At1g67325-like"/>
    <property type="match status" value="1"/>
</dbReference>
<dbReference type="Gene3D" id="4.10.1060.10">
    <property type="entry name" value="Zinc finger, RanBP2-type"/>
    <property type="match status" value="3"/>
</dbReference>
<dbReference type="InterPro" id="IPR001876">
    <property type="entry name" value="Znf_RanBP2"/>
</dbReference>
<dbReference type="InterPro" id="IPR036443">
    <property type="entry name" value="Znf_RanBP2_sf"/>
</dbReference>
<dbReference type="PANTHER" id="PTHR12999:SF17">
    <property type="entry name" value="ZINC FINGER RAN-BINDING DOMAIN-CONTAINING PROTEIN 2"/>
    <property type="match status" value="1"/>
</dbReference>
<dbReference type="PANTHER" id="PTHR12999">
    <property type="entry name" value="ZINC FINGER RAN-BINDING DOMAIN-CONTAINING PROTEIN 2 ZRANB2-RELATED"/>
    <property type="match status" value="1"/>
</dbReference>
<dbReference type="Pfam" id="PF00641">
    <property type="entry name" value="Zn_ribbon_RanBP"/>
    <property type="match status" value="3"/>
</dbReference>
<dbReference type="SMART" id="SM00547">
    <property type="entry name" value="ZnF_RBZ"/>
    <property type="match status" value="3"/>
</dbReference>
<dbReference type="SUPFAM" id="SSF90209">
    <property type="entry name" value="Ran binding protein zinc finger-like"/>
    <property type="match status" value="3"/>
</dbReference>